<accession>P19536</accession>
<comment type="function">
    <text evidence="3 4">Component of the cytochrome c oxidase, the last enzyme in the mitochondrial electron transport chain which drives oxidative phosphorylation. The respiratory chain contains 3 multisubunit complexes succinate dehydrogenase (complex II, CII), ubiquinol-cytochrome c oxidoreductase (cytochrome b-c1 complex, complex III, CIII) and cytochrome c oxidase (complex IV, CIV), that cooperate to transfer electrons derived from NADH and succinate to molecular oxygen, creating an electrochemical gradient over the inner membrane that drives transmembrane transport and the ATP synthase. Cytochrome c oxidase is the component of the respiratory chain that catalyzes the reduction of oxygen to water. Electrons originating from reduced cytochrome c in the intermembrane space (IMS) are transferred via the dinuclear copper A center (CU(A)) of subunit 2 and heme A of subunit 1 to the active site in subunit 1, a binuclear center (BNC) formed by heme A3 and copper B (CU(B)). The BNC reduces molecular oxygen to 2 water molecules using 4 electrons from cytochrome c in the IMS and 4 protons from the mitochondrial matrix.</text>
</comment>
<comment type="pathway">
    <text evidence="3 4">Energy metabolism; oxidative phosphorylation.</text>
</comment>
<comment type="subunit">
    <text evidence="3 4">Component of the cytochrome c oxidase (complex IV, CIV), a multisubunit enzyme composed of 14 subunits (PubMed:34616041, PubMed:38575788). The complex is composed of a catalytic core of 3 subunits MT-CO1, MT-CO2 and MT-CO3, encoded in the mitochondrial DNA, and 11 supernumerary subunits COX4I, COX5A, COX5B, COX6A, COX6B, COX6C, COX7A, COX7B, COX7C, COX8 and NDUFA4, which are encoded in the nuclear genome (PubMed:34616041, PubMed:38575788). The complex exists as a monomer or a dimer and forms supercomplexes (SCs) in the inner mitochondrial membrane with NADH-ubiquinone oxidoreductase (complex I, CI) and ubiquinol-cytochrome c oxidoreductase (cytochrome b-c1 complex, complex III, CIII), resulting in different assemblies (supercomplex SCI(1)III(2)IV(1) and megacomplex MCI(2)III(2)IV(2)) (PubMed:34616041, PubMed:38575788).</text>
</comment>
<comment type="subcellular location">
    <subcellularLocation>
        <location evidence="3 4">Mitochondrion inner membrane</location>
        <topology evidence="3">Peripheral membrane protein</topology>
        <orientation evidence="3">Matrix side</orientation>
    </subcellularLocation>
</comment>
<comment type="similarity">
    <text evidence="5">Belongs to the cytochrome c oxidase subunit 5B family.</text>
</comment>
<proteinExistence type="evidence at protein level"/>
<name>COX5B_MOUSE</name>
<gene>
    <name type="primary">Cox5b</name>
</gene>
<sequence length="128" mass="13813">MASRLLRGVGALAAQALRRTARGAAVTRSMASGGGVPTDEEQATGLEREIMIAAQKGLDPYNMLPPKAASGTKEDPNLVPSISNKRIVGCICEEDNCTVIWFWLHKGESQRCPNCGTHYKLVPHQMAH</sequence>
<protein>
    <recommendedName>
        <fullName>Cytochrome c oxidase subunit 5B, mitochondrial</fullName>
    </recommendedName>
    <alternativeName>
        <fullName>Cytochrome c oxidase polypeptide Vb</fullName>
    </alternativeName>
</protein>
<evidence type="ECO:0000250" key="1">
    <source>
        <dbReference type="UniProtKB" id="P00428"/>
    </source>
</evidence>
<evidence type="ECO:0000255" key="2">
    <source>
        <dbReference type="PROSITE-ProRule" id="PRU00692"/>
    </source>
</evidence>
<evidence type="ECO:0000269" key="3">
    <source>
    </source>
</evidence>
<evidence type="ECO:0000269" key="4">
    <source>
    </source>
</evidence>
<evidence type="ECO:0000305" key="5"/>
<evidence type="ECO:0000312" key="6">
    <source>
        <dbReference type="PDB" id="7O3E"/>
    </source>
</evidence>
<evidence type="ECO:0007744" key="7">
    <source>
        <dbReference type="PDB" id="7O37"/>
    </source>
</evidence>
<evidence type="ECO:0007744" key="8">
    <source>
        <dbReference type="PDB" id="7O3C"/>
    </source>
</evidence>
<evidence type="ECO:0007744" key="9">
    <source>
        <dbReference type="PDB" id="8PW5"/>
    </source>
</evidence>
<evidence type="ECO:0007744" key="10">
    <source>
    </source>
</evidence>
<evidence type="ECO:0007829" key="11">
    <source>
        <dbReference type="PDB" id="7O37"/>
    </source>
</evidence>
<keyword id="KW-0002">3D-structure</keyword>
<keyword id="KW-0007">Acetylation</keyword>
<keyword id="KW-0903">Direct protein sequencing</keyword>
<keyword id="KW-0472">Membrane</keyword>
<keyword id="KW-0479">Metal-binding</keyword>
<keyword id="KW-0496">Mitochondrion</keyword>
<keyword id="KW-0999">Mitochondrion inner membrane</keyword>
<keyword id="KW-1185">Reference proteome</keyword>
<keyword id="KW-0809">Transit peptide</keyword>
<keyword id="KW-0862">Zinc</keyword>
<dbReference type="EMBL" id="X53157">
    <property type="protein sequence ID" value="CAA37313.1"/>
    <property type="molecule type" value="mRNA"/>
</dbReference>
<dbReference type="EMBL" id="M77040">
    <property type="protein sequence ID" value="AAA37515.1"/>
    <property type="molecule type" value="Genomic_DNA"/>
</dbReference>
<dbReference type="PIR" id="A39425">
    <property type="entry name" value="A39425"/>
</dbReference>
<dbReference type="PDB" id="7O37">
    <property type="method" value="EM"/>
    <property type="resolution" value="3.20 A"/>
    <property type="chains" value="f=30-128"/>
</dbReference>
<dbReference type="PDB" id="7O3C">
    <property type="method" value="EM"/>
    <property type="resolution" value="3.30 A"/>
    <property type="chains" value="f=30-128"/>
</dbReference>
<dbReference type="PDB" id="7O3E">
    <property type="method" value="EM"/>
    <property type="resolution" value="3.60 A"/>
    <property type="chains" value="f=30-128"/>
</dbReference>
<dbReference type="PDB" id="8PW5">
    <property type="method" value="EM"/>
    <property type="resolution" value="3.60 A"/>
    <property type="chains" value="f/s=1-128"/>
</dbReference>
<dbReference type="PDB" id="8PW6">
    <property type="method" value="EM"/>
    <property type="resolution" value="3.30 A"/>
    <property type="chains" value="s=1-128"/>
</dbReference>
<dbReference type="PDB" id="8PW7">
    <property type="method" value="EM"/>
    <property type="resolution" value="3.50 A"/>
    <property type="chains" value="s=1-128"/>
</dbReference>
<dbReference type="PDBsum" id="7O37"/>
<dbReference type="PDBsum" id="7O3C"/>
<dbReference type="PDBsum" id="7O3E"/>
<dbReference type="PDBsum" id="8PW5"/>
<dbReference type="PDBsum" id="8PW6"/>
<dbReference type="PDBsum" id="8PW7"/>
<dbReference type="EMDB" id="EMD-12702"/>
<dbReference type="EMDB" id="EMD-12703"/>
<dbReference type="EMDB" id="EMD-12705"/>
<dbReference type="EMDB" id="EMD-17989"/>
<dbReference type="EMDB" id="EMD-17990"/>
<dbReference type="EMDB" id="EMD-17991"/>
<dbReference type="SMR" id="P19536"/>
<dbReference type="CORUM" id="P19536"/>
<dbReference type="FunCoup" id="P19536">
    <property type="interactions" value="1647"/>
</dbReference>
<dbReference type="IntAct" id="P19536">
    <property type="interactions" value="3"/>
</dbReference>
<dbReference type="STRING" id="10090.ENSMUSP00000038961"/>
<dbReference type="GlyGen" id="P19536">
    <property type="glycosylation" value="2 sites, 1 O-linked glycan (1 site)"/>
</dbReference>
<dbReference type="iPTMnet" id="P19536"/>
<dbReference type="MetOSite" id="P19536"/>
<dbReference type="PhosphoSitePlus" id="P19536"/>
<dbReference type="SwissPalm" id="P19536"/>
<dbReference type="jPOST" id="P19536"/>
<dbReference type="PaxDb" id="10090-ENSMUSP00000038961"/>
<dbReference type="PeptideAtlas" id="P19536"/>
<dbReference type="ProteomicsDB" id="283428"/>
<dbReference type="Pumba" id="P19536"/>
<dbReference type="AGR" id="MGI:88475"/>
<dbReference type="MGI" id="MGI:88475">
    <property type="gene designation" value="Cox5b"/>
</dbReference>
<dbReference type="eggNOG" id="KOG3352">
    <property type="taxonomic scope" value="Eukaryota"/>
</dbReference>
<dbReference type="InParanoid" id="P19536"/>
<dbReference type="Reactome" id="R-MMU-5628897">
    <property type="pathway name" value="TP53 Regulates Metabolic Genes"/>
</dbReference>
<dbReference type="Reactome" id="R-MMU-611105">
    <property type="pathway name" value="Respiratory electron transport"/>
</dbReference>
<dbReference type="Reactome" id="R-MMU-9707564">
    <property type="pathway name" value="Cytoprotection by HMOX1"/>
</dbReference>
<dbReference type="Reactome" id="R-MMU-9837999">
    <property type="pathway name" value="Mitochondrial protein degradation"/>
</dbReference>
<dbReference type="Reactome" id="R-MMU-9864848">
    <property type="pathway name" value="Complex IV assembly"/>
</dbReference>
<dbReference type="UniPathway" id="UPA00705"/>
<dbReference type="CD-CODE" id="CE726F99">
    <property type="entry name" value="Postsynaptic density"/>
</dbReference>
<dbReference type="ChiTaRS" id="Cox5b">
    <property type="organism name" value="mouse"/>
</dbReference>
<dbReference type="PRO" id="PR:P19536"/>
<dbReference type="Proteomes" id="UP000000589">
    <property type="component" value="Unplaced"/>
</dbReference>
<dbReference type="RNAct" id="P19536">
    <property type="molecule type" value="protein"/>
</dbReference>
<dbReference type="GO" id="GO:0005743">
    <property type="term" value="C:mitochondrial inner membrane"/>
    <property type="evidence" value="ECO:0000314"/>
    <property type="project" value="UniProtKB"/>
</dbReference>
<dbReference type="GO" id="GO:0005739">
    <property type="term" value="C:mitochondrion"/>
    <property type="evidence" value="ECO:0000314"/>
    <property type="project" value="MGI"/>
</dbReference>
<dbReference type="GO" id="GO:0043209">
    <property type="term" value="C:myelin sheath"/>
    <property type="evidence" value="ECO:0007005"/>
    <property type="project" value="UniProtKB"/>
</dbReference>
<dbReference type="GO" id="GO:0045277">
    <property type="term" value="C:respiratory chain complex IV"/>
    <property type="evidence" value="ECO:0000314"/>
    <property type="project" value="UniProtKB"/>
</dbReference>
<dbReference type="GO" id="GO:0046872">
    <property type="term" value="F:metal ion binding"/>
    <property type="evidence" value="ECO:0007669"/>
    <property type="project" value="UniProtKB-KW"/>
</dbReference>
<dbReference type="GO" id="GO:0006123">
    <property type="term" value="P:mitochondrial electron transport, cytochrome c to oxygen"/>
    <property type="evidence" value="ECO:0007669"/>
    <property type="project" value="InterPro"/>
</dbReference>
<dbReference type="CDD" id="cd00924">
    <property type="entry name" value="Cyt_c_Oxidase_Vb"/>
    <property type="match status" value="1"/>
</dbReference>
<dbReference type="FunFam" id="2.60.11.10:FF:000001">
    <property type="entry name" value="Cytochrome c oxidase subunit 5B, mitochondrial"/>
    <property type="match status" value="1"/>
</dbReference>
<dbReference type="Gene3D" id="2.60.11.10">
    <property type="entry name" value="Cytochrome c oxidase, subunit Vb"/>
    <property type="match status" value="1"/>
</dbReference>
<dbReference type="InterPro" id="IPR002124">
    <property type="entry name" value="Cyt_c_oxidase_su5b"/>
</dbReference>
<dbReference type="InterPro" id="IPR036972">
    <property type="entry name" value="Cyt_c_oxidase_su5b_sf"/>
</dbReference>
<dbReference type="PANTHER" id="PTHR10122">
    <property type="entry name" value="CYTOCHROME C OXIDASE SUBUNIT 5B, MITOCHONDRIAL"/>
    <property type="match status" value="1"/>
</dbReference>
<dbReference type="PANTHER" id="PTHR10122:SF20">
    <property type="entry name" value="CYTOCHROME C OXIDASE SUBUNIT 5B, MITOCHONDRIAL"/>
    <property type="match status" value="1"/>
</dbReference>
<dbReference type="Pfam" id="PF01215">
    <property type="entry name" value="COX5B"/>
    <property type="match status" value="1"/>
</dbReference>
<dbReference type="SUPFAM" id="SSF57802">
    <property type="entry name" value="Rubredoxin-like"/>
    <property type="match status" value="1"/>
</dbReference>
<dbReference type="PROSITE" id="PS00848">
    <property type="entry name" value="COX5B_1"/>
    <property type="match status" value="1"/>
</dbReference>
<dbReference type="PROSITE" id="PS51359">
    <property type="entry name" value="COX5B_2"/>
    <property type="match status" value="1"/>
</dbReference>
<feature type="transit peptide" description="Mitochondrion" evidence="1">
    <location>
        <begin position="1"/>
        <end position="30"/>
    </location>
</feature>
<feature type="chain" id="PRO_0000006110" description="Cytochrome c oxidase subunit 5B, mitochondrial">
    <location>
        <begin position="31"/>
        <end position="128"/>
    </location>
</feature>
<feature type="binding site" evidence="2 3 7 8">
    <location>
        <position position="90"/>
    </location>
    <ligand>
        <name>Zn(2+)</name>
        <dbReference type="ChEBI" id="CHEBI:29105"/>
    </ligand>
</feature>
<feature type="binding site" evidence="2 3 7 8">
    <location>
        <position position="92"/>
    </location>
    <ligand>
        <name>Zn(2+)</name>
        <dbReference type="ChEBI" id="CHEBI:29105"/>
    </ligand>
</feature>
<feature type="binding site" evidence="2 3 7 8">
    <location>
        <position position="112"/>
    </location>
    <ligand>
        <name>Zn(2+)</name>
        <dbReference type="ChEBI" id="CHEBI:29105"/>
    </ligand>
</feature>
<feature type="binding site" evidence="2 3 7 8">
    <location>
        <position position="115"/>
    </location>
    <ligand>
        <name>Zn(2+)</name>
        <dbReference type="ChEBI" id="CHEBI:29105"/>
    </ligand>
</feature>
<feature type="modified residue" description="N6-acetyllysine" evidence="10">
    <location>
        <position position="67"/>
    </location>
</feature>
<feature type="modified residue" description="N6-acetyllysine" evidence="10">
    <location>
        <position position="85"/>
    </location>
</feature>
<feature type="modified residue" description="N6-acetyllysine" evidence="10">
    <location>
        <position position="120"/>
    </location>
</feature>
<feature type="turn" evidence="11">
    <location>
        <begin position="39"/>
        <end position="41"/>
    </location>
</feature>
<feature type="helix" evidence="11">
    <location>
        <begin position="45"/>
        <end position="54"/>
    </location>
</feature>
<feature type="turn" evidence="11">
    <location>
        <begin position="55"/>
        <end position="57"/>
    </location>
</feature>
<feature type="strand" evidence="11">
    <location>
        <begin position="72"/>
        <end position="75"/>
    </location>
</feature>
<feature type="strand" evidence="11">
    <location>
        <begin position="77"/>
        <end position="80"/>
    </location>
</feature>
<feature type="strand" evidence="11">
    <location>
        <begin position="82"/>
        <end position="84"/>
    </location>
</feature>
<feature type="strand" evidence="11">
    <location>
        <begin position="86"/>
        <end position="90"/>
    </location>
</feature>
<feature type="strand" evidence="11">
    <location>
        <begin position="93"/>
        <end position="95"/>
    </location>
</feature>
<feature type="strand" evidence="11">
    <location>
        <begin position="100"/>
        <end position="104"/>
    </location>
</feature>
<feature type="strand" evidence="11">
    <location>
        <begin position="106"/>
        <end position="108"/>
    </location>
</feature>
<feature type="turn" evidence="11">
    <location>
        <begin position="113"/>
        <end position="115"/>
    </location>
</feature>
<feature type="strand" evidence="11">
    <location>
        <begin position="118"/>
        <end position="122"/>
    </location>
</feature>
<organism>
    <name type="scientific">Mus musculus</name>
    <name type="common">Mouse</name>
    <dbReference type="NCBI Taxonomy" id="10090"/>
    <lineage>
        <taxon>Eukaryota</taxon>
        <taxon>Metazoa</taxon>
        <taxon>Chordata</taxon>
        <taxon>Craniata</taxon>
        <taxon>Vertebrata</taxon>
        <taxon>Euteleostomi</taxon>
        <taxon>Mammalia</taxon>
        <taxon>Eutheria</taxon>
        <taxon>Euarchontoglires</taxon>
        <taxon>Glires</taxon>
        <taxon>Rodentia</taxon>
        <taxon>Myomorpha</taxon>
        <taxon>Muroidea</taxon>
        <taxon>Muridae</taxon>
        <taxon>Murinae</taxon>
        <taxon>Mus</taxon>
        <taxon>Mus</taxon>
    </lineage>
</organism>
<reference key="1">
    <citation type="journal article" date="1990" name="Biochim. Biophys. Acta">
        <title>Nucleotide sequence of cDNA for nuclear encoded subunit Vb of mouse cytochrome-c oxidase.</title>
        <authorList>
            <person name="Basu A."/>
            <person name="Avadhani N.G."/>
        </authorList>
    </citation>
    <scope>NUCLEOTIDE SEQUENCE [MRNA]</scope>
    <source>
        <tissue>Bone marrow tumor</tissue>
    </source>
</reference>
<reference key="2">
    <citation type="journal article" date="1991" name="J. Biol. Chem.">
        <title>Structural organization of nuclear gene for subunit Vb of mouse mitochondrial cytochrome c oxidase.</title>
        <authorList>
            <person name="Basu A."/>
            <person name="Avadhani N.G."/>
        </authorList>
    </citation>
    <scope>NUCLEOTIDE SEQUENCE [GENOMIC DNA]</scope>
</reference>
<reference key="3">
    <citation type="submission" date="2007-04" db="UniProtKB">
        <authorList>
            <person name="Lubec G."/>
            <person name="Kang S.U."/>
        </authorList>
    </citation>
    <scope>PROTEIN SEQUENCE OF 57-67 AND 74-85</scope>
    <scope>IDENTIFICATION BY MASS SPECTROMETRY</scope>
    <source>
        <strain>C57BL/6J</strain>
        <tissue>Brain</tissue>
    </source>
</reference>
<reference key="4">
    <citation type="journal article" date="2010" name="Cell">
        <title>A tissue-specific atlas of mouse protein phosphorylation and expression.</title>
        <authorList>
            <person name="Huttlin E.L."/>
            <person name="Jedrychowski M.P."/>
            <person name="Elias J.E."/>
            <person name="Goswami T."/>
            <person name="Rad R."/>
            <person name="Beausoleil S.A."/>
            <person name="Villen J."/>
            <person name="Haas W."/>
            <person name="Sowa M.E."/>
            <person name="Gygi S.P."/>
        </authorList>
    </citation>
    <scope>IDENTIFICATION BY MASS SPECTROMETRY [LARGE SCALE ANALYSIS]</scope>
    <source>
        <tissue>Brain</tissue>
        <tissue>Brown adipose tissue</tissue>
        <tissue>Heart</tissue>
        <tissue>Kidney</tissue>
        <tissue>Liver</tissue>
        <tissue>Lung</tissue>
        <tissue>Pancreas</tissue>
        <tissue>Spleen</tissue>
        <tissue>Testis</tissue>
    </source>
</reference>
<reference key="5">
    <citation type="journal article" date="2013" name="Proc. Natl. Acad. Sci. U.S.A.">
        <title>Label-free quantitative proteomics of the lysine acetylome in mitochondria identifies substrates of SIRT3 in metabolic pathways.</title>
        <authorList>
            <person name="Rardin M.J."/>
            <person name="Newman J.C."/>
            <person name="Held J.M."/>
            <person name="Cusack M.P."/>
            <person name="Sorensen D.J."/>
            <person name="Li B."/>
            <person name="Schilling B."/>
            <person name="Mooney S.D."/>
            <person name="Kahn C.R."/>
            <person name="Verdin E."/>
            <person name="Gibson B.W."/>
        </authorList>
    </citation>
    <scope>ACETYLATION [LARGE SCALE ANALYSIS] AT LYS-67; LYS-85 AND LYS-120</scope>
    <scope>IDENTIFICATION BY MASS SPECTROMETRY [LARGE SCALE ANALYSIS]</scope>
    <source>
        <tissue>Liver</tissue>
    </source>
</reference>
<reference evidence="6 7 8" key="6">
    <citation type="journal article" date="2021" name="Nature">
        <title>Structure and assembly of the mammalian mitochondrial supercomplex CIII2CIV.</title>
        <authorList>
            <person name="Vercellino I."/>
            <person name="Sazanov L.A."/>
        </authorList>
    </citation>
    <scope>STRUCTURE BY ELECTRON MICROSCOPY (3.20 ANGSTROMS) IN COMPLEX WITH MITOCHONDRIAL RESPIRATORY SUPERCOMPLEX</scope>
    <scope>FUNCTION</scope>
    <scope>PATHWAY</scope>
    <scope>SUBCELLULAR LOCATION</scope>
    <scope>SUBUNIT</scope>
</reference>
<reference evidence="9" key="7">
    <citation type="journal article" date="2024" name="Nat. Struct. Mol. Biol.">
        <title>SCAF1 drives the compositional diversity of mammalian respirasomes.</title>
        <authorList>
            <person name="Vercellino I."/>
            <person name="Sazanov L.A."/>
        </authorList>
    </citation>
    <scope>STRUCTURE BY ELECTRON MICROSCOPY (3.60 ANGSTROMS) IN COMPLEX WITH MITOCHONDRIAL RESPIRATORY SUPERCOMPLEX</scope>
    <scope>FUNCTION</scope>
    <scope>SUBCELLULAR LOCATION</scope>
    <scope>SUBUNIT</scope>
</reference>